<dbReference type="EMBL" id="L42023">
    <property type="protein sequence ID" value="AAC21952.1"/>
    <property type="molecule type" value="Genomic_DNA"/>
</dbReference>
<dbReference type="PIR" id="F64059">
    <property type="entry name" value="F64059"/>
</dbReference>
<dbReference type="RefSeq" id="NP_438454.1">
    <property type="nucleotide sequence ID" value="NC_000907.1"/>
</dbReference>
<dbReference type="SMR" id="P44614"/>
<dbReference type="STRING" id="71421.HI_0287"/>
<dbReference type="EnsemblBacteria" id="AAC21952">
    <property type="protein sequence ID" value="AAC21952"/>
    <property type="gene ID" value="HI_0287"/>
</dbReference>
<dbReference type="KEGG" id="hin:HI_0287"/>
<dbReference type="PATRIC" id="fig|71421.8.peg.303"/>
<dbReference type="eggNOG" id="COG0814">
    <property type="taxonomic scope" value="Bacteria"/>
</dbReference>
<dbReference type="HOGENOM" id="CLU_038102_2_1_6"/>
<dbReference type="OrthoDB" id="18749at2"/>
<dbReference type="PhylomeDB" id="P44614"/>
<dbReference type="BioCyc" id="HINF71421:G1GJ1-305-MONOMER"/>
<dbReference type="Proteomes" id="UP000000579">
    <property type="component" value="Chromosome"/>
</dbReference>
<dbReference type="GO" id="GO:0005886">
    <property type="term" value="C:plasma membrane"/>
    <property type="evidence" value="ECO:0000318"/>
    <property type="project" value="GO_Central"/>
</dbReference>
<dbReference type="GO" id="GO:0015173">
    <property type="term" value="F:aromatic amino acid transmembrane transporter activity"/>
    <property type="evidence" value="ECO:0007669"/>
    <property type="project" value="InterPro"/>
</dbReference>
<dbReference type="GO" id="GO:0015293">
    <property type="term" value="F:symporter activity"/>
    <property type="evidence" value="ECO:0007669"/>
    <property type="project" value="UniProtKB-KW"/>
</dbReference>
<dbReference type="GO" id="GO:0022857">
    <property type="term" value="F:transmembrane transporter activity"/>
    <property type="evidence" value="ECO:0000318"/>
    <property type="project" value="GO_Central"/>
</dbReference>
<dbReference type="GO" id="GO:0003333">
    <property type="term" value="P:amino acid transmembrane transport"/>
    <property type="evidence" value="ECO:0000318"/>
    <property type="project" value="GO_Central"/>
</dbReference>
<dbReference type="Gene3D" id="1.20.1740.10">
    <property type="entry name" value="Amino acid/polyamine transporter I"/>
    <property type="match status" value="1"/>
</dbReference>
<dbReference type="InterPro" id="IPR018227">
    <property type="entry name" value="Amino_acid_transport_2"/>
</dbReference>
<dbReference type="InterPro" id="IPR013061">
    <property type="entry name" value="Trp/try_permease_CS"/>
</dbReference>
<dbReference type="InterPro" id="IPR013059">
    <property type="entry name" value="Trp_tyr_transpt"/>
</dbReference>
<dbReference type="NCBIfam" id="TIGR00837">
    <property type="entry name" value="araaP"/>
    <property type="match status" value="1"/>
</dbReference>
<dbReference type="NCBIfam" id="NF007789">
    <property type="entry name" value="PRK10483.1"/>
    <property type="match status" value="1"/>
</dbReference>
<dbReference type="PANTHER" id="PTHR46997">
    <property type="entry name" value="LOW AFFINITY TRYPTOPHAN PERMEASE-RELATED"/>
    <property type="match status" value="1"/>
</dbReference>
<dbReference type="PANTHER" id="PTHR46997:SF1">
    <property type="entry name" value="LOW AFFINITY TRYPTOPHAN PERMEASE-RELATED"/>
    <property type="match status" value="1"/>
</dbReference>
<dbReference type="Pfam" id="PF03222">
    <property type="entry name" value="Trp_Tyr_perm"/>
    <property type="match status" value="1"/>
</dbReference>
<dbReference type="PRINTS" id="PR00166">
    <property type="entry name" value="AROAAPRMEASE"/>
</dbReference>
<dbReference type="PROSITE" id="PS00594">
    <property type="entry name" value="AROMATIC_AA_PERMEASE_1"/>
    <property type="match status" value="1"/>
</dbReference>
<comment type="function">
    <text evidence="1">Involved in the transport of tryptophan into the cell.</text>
</comment>
<comment type="catalytic activity">
    <reaction evidence="1">
        <text>L-tryptophan(in) + H(+)(in) = L-tryptophan(out) + H(+)(out)</text>
        <dbReference type="Rhea" id="RHEA:28879"/>
        <dbReference type="ChEBI" id="CHEBI:15378"/>
        <dbReference type="ChEBI" id="CHEBI:57912"/>
    </reaction>
    <physiologicalReaction direction="right-to-left" evidence="1">
        <dbReference type="Rhea" id="RHEA:28881"/>
    </physiologicalReaction>
</comment>
<comment type="subcellular location">
    <subcellularLocation>
        <location evidence="1">Cell inner membrane</location>
        <topology evidence="2">Multi-pass membrane protein</topology>
    </subcellularLocation>
</comment>
<comment type="similarity">
    <text evidence="3">Belongs to the amino acid/polyamine transporter 2 family. Mtr/TnaB/TyrP permease subfamily.</text>
</comment>
<accession>P44614</accession>
<name>MTR_HAEIN</name>
<reference key="1">
    <citation type="journal article" date="1995" name="Science">
        <title>Whole-genome random sequencing and assembly of Haemophilus influenzae Rd.</title>
        <authorList>
            <person name="Fleischmann R.D."/>
            <person name="Adams M.D."/>
            <person name="White O."/>
            <person name="Clayton R.A."/>
            <person name="Kirkness E.F."/>
            <person name="Kerlavage A.R."/>
            <person name="Bult C.J."/>
            <person name="Tomb J.-F."/>
            <person name="Dougherty B.A."/>
            <person name="Merrick J.M."/>
            <person name="McKenney K."/>
            <person name="Sutton G.G."/>
            <person name="FitzHugh W."/>
            <person name="Fields C.A."/>
            <person name="Gocayne J.D."/>
            <person name="Scott J.D."/>
            <person name="Shirley R."/>
            <person name="Liu L.-I."/>
            <person name="Glodek A."/>
            <person name="Kelley J.M."/>
            <person name="Weidman J.F."/>
            <person name="Phillips C.A."/>
            <person name="Spriggs T."/>
            <person name="Hedblom E."/>
            <person name="Cotton M.D."/>
            <person name="Utterback T.R."/>
            <person name="Hanna M.C."/>
            <person name="Nguyen D.T."/>
            <person name="Saudek D.M."/>
            <person name="Brandon R.C."/>
            <person name="Fine L.D."/>
            <person name="Fritchman J.L."/>
            <person name="Fuhrmann J.L."/>
            <person name="Geoghagen N.S.M."/>
            <person name="Gnehm C.L."/>
            <person name="McDonald L.A."/>
            <person name="Small K.V."/>
            <person name="Fraser C.M."/>
            <person name="Smith H.O."/>
            <person name="Venter J.C."/>
        </authorList>
    </citation>
    <scope>NUCLEOTIDE SEQUENCE [LARGE SCALE GENOMIC DNA]</scope>
    <source>
        <strain>ATCC 51907 / DSM 11121 / KW20 / Rd</strain>
    </source>
</reference>
<feature type="chain" id="PRO_0000093798" description="Tryptophan-specific transport protein">
    <location>
        <begin position="1"/>
        <end position="418"/>
    </location>
</feature>
<feature type="transmembrane region" description="Helical" evidence="2">
    <location>
        <begin position="7"/>
        <end position="27"/>
    </location>
</feature>
<feature type="transmembrane region" description="Helical" evidence="2">
    <location>
        <begin position="32"/>
        <end position="52"/>
    </location>
</feature>
<feature type="transmembrane region" description="Helical" evidence="2">
    <location>
        <begin position="89"/>
        <end position="109"/>
    </location>
</feature>
<feature type="transmembrane region" description="Helical" evidence="2">
    <location>
        <begin position="131"/>
        <end position="151"/>
    </location>
</feature>
<feature type="transmembrane region" description="Helical" evidence="2">
    <location>
        <begin position="154"/>
        <end position="174"/>
    </location>
</feature>
<feature type="transmembrane region" description="Helical" evidence="2">
    <location>
        <begin position="194"/>
        <end position="214"/>
    </location>
</feature>
<feature type="transmembrane region" description="Helical" evidence="2">
    <location>
        <begin position="232"/>
        <end position="252"/>
    </location>
</feature>
<feature type="transmembrane region" description="Helical" evidence="2">
    <location>
        <begin position="289"/>
        <end position="309"/>
    </location>
</feature>
<feature type="transmembrane region" description="Helical" evidence="2">
    <location>
        <begin position="321"/>
        <end position="343"/>
    </location>
</feature>
<feature type="transmembrane region" description="Helical" evidence="2">
    <location>
        <begin position="345"/>
        <end position="365"/>
    </location>
</feature>
<feature type="transmembrane region" description="Helical" evidence="2">
    <location>
        <begin position="384"/>
        <end position="404"/>
    </location>
</feature>
<sequence>MIQQKSPSLLGGAMIIAGTAIGAGMLANPTSTAGVWFIGSILALIYTWFCMTTSGLMILEANLHYPTGSSFDTIVKDLLGKSWNTINGLSVAFVLYILTYAYITSGGGITQNLLNQAFSSAESAVDIGRTSGSLIFCLILAAFVWLSTKAVDRFTTVLIVGMVVAFFLSTTGLLSSVKTAVLFNTVAESEQTYLPYLLTALPVCLVSFGFHGNVPSLVKYYDRDGRRVMKSIFIGTGLALVIYILWQLAVQGNLPRTEFAPVIEKGGDVSALLEALHKYIEVEYLSVALNFFAYMAISTSFLGVTLGLFDYIADLFKFDDSLLGRTKTTLVTFLPPLLLSLQFPYGFVIAIGYAGLAATIWAAIVPALLAKASRQKFPQASYKVYGGNFMIGFVILFGILNIVAQIGANLGWFASFTG</sequence>
<keyword id="KW-0029">Amino-acid transport</keyword>
<keyword id="KW-0997">Cell inner membrane</keyword>
<keyword id="KW-1003">Cell membrane</keyword>
<keyword id="KW-0472">Membrane</keyword>
<keyword id="KW-1185">Reference proteome</keyword>
<keyword id="KW-0769">Symport</keyword>
<keyword id="KW-0812">Transmembrane</keyword>
<keyword id="KW-1133">Transmembrane helix</keyword>
<keyword id="KW-0813">Transport</keyword>
<organism>
    <name type="scientific">Haemophilus influenzae (strain ATCC 51907 / DSM 11121 / KW20 / Rd)</name>
    <dbReference type="NCBI Taxonomy" id="71421"/>
    <lineage>
        <taxon>Bacteria</taxon>
        <taxon>Pseudomonadati</taxon>
        <taxon>Pseudomonadota</taxon>
        <taxon>Gammaproteobacteria</taxon>
        <taxon>Pasteurellales</taxon>
        <taxon>Pasteurellaceae</taxon>
        <taxon>Haemophilus</taxon>
    </lineage>
</organism>
<proteinExistence type="inferred from homology"/>
<protein>
    <recommendedName>
        <fullName>Tryptophan-specific transport protein</fullName>
    </recommendedName>
    <alternativeName>
        <fullName>Tryptophan permease</fullName>
    </alternativeName>
</protein>
<gene>
    <name type="primary">mtr</name>
    <name type="ordered locus">HI_0287</name>
</gene>
<evidence type="ECO:0000250" key="1">
    <source>
        <dbReference type="UniProtKB" id="P0AAD2"/>
    </source>
</evidence>
<evidence type="ECO:0000255" key="2"/>
<evidence type="ECO:0000305" key="3"/>